<evidence type="ECO:0000250" key="1"/>
<evidence type="ECO:0000250" key="2">
    <source>
        <dbReference type="UniProtKB" id="P11759"/>
    </source>
</evidence>
<evidence type="ECO:0000305" key="3"/>
<feature type="chain" id="PRO_0000074070" description="GDP-mannose 6-dehydrogenase">
    <location>
        <begin position="1"/>
        <end position="438"/>
    </location>
</feature>
<feature type="active site" evidence="1">
    <location>
        <position position="268"/>
    </location>
</feature>
<feature type="binding site" description="in chain A" evidence="2">
    <location>
        <position position="10"/>
    </location>
    <ligand>
        <name>NAD(+)</name>
        <dbReference type="ChEBI" id="CHEBI:57540"/>
        <note>ligand shared between homodimeric partners</note>
    </ligand>
</feature>
<feature type="binding site" description="in chain A" evidence="2">
    <location>
        <position position="11"/>
    </location>
    <ligand>
        <name>NAD(+)</name>
        <dbReference type="ChEBI" id="CHEBI:57540"/>
        <note>ligand shared between homodimeric partners</note>
    </ligand>
</feature>
<feature type="binding site" description="in chain A" evidence="2">
    <location>
        <position position="30"/>
    </location>
    <ligand>
        <name>NAD(+)</name>
        <dbReference type="ChEBI" id="CHEBI:57540"/>
        <note>ligand shared between homodimeric partners</note>
    </ligand>
</feature>
<feature type="binding site" description="in chain A" evidence="2">
    <location>
        <position position="35"/>
    </location>
    <ligand>
        <name>NAD(+)</name>
        <dbReference type="ChEBI" id="CHEBI:57540"/>
        <note>ligand shared between homodimeric partners</note>
    </ligand>
</feature>
<feature type="binding site" description="in chain A" evidence="2">
    <location>
        <position position="86"/>
    </location>
    <ligand>
        <name>NAD(+)</name>
        <dbReference type="ChEBI" id="CHEBI:57540"/>
        <note>ligand shared between homodimeric partners</note>
    </ligand>
</feature>
<feature type="binding site" description="in chain A" evidence="2">
    <location>
        <position position="124"/>
    </location>
    <ligand>
        <name>NAD(+)</name>
        <dbReference type="ChEBI" id="CHEBI:57540"/>
        <note>ligand shared between homodimeric partners</note>
    </ligand>
</feature>
<feature type="binding site" description="in chain A" evidence="2">
    <location>
        <position position="161"/>
    </location>
    <ligand>
        <name>GDP-alpha-D-mannuronate</name>
        <dbReference type="ChEBI" id="CHEBI:84886"/>
        <note>ligand shared between homodimeric partners</note>
    </ligand>
</feature>
<feature type="binding site" description="in chain A" evidence="2">
    <location>
        <position position="210"/>
    </location>
    <ligand>
        <name>GDP-alpha-D-mannuronate</name>
        <dbReference type="ChEBI" id="CHEBI:84886"/>
        <note>ligand shared between homodimeric partners</note>
    </ligand>
</feature>
<feature type="binding site" description="in chain A" evidence="2">
    <location>
        <position position="214"/>
    </location>
    <ligand>
        <name>GDP-alpha-D-mannuronate</name>
        <dbReference type="ChEBI" id="CHEBI:84886"/>
        <note>ligand shared between homodimeric partners</note>
    </ligand>
</feature>
<feature type="binding site" description="in chain A" evidence="2">
    <location>
        <position position="217"/>
    </location>
    <ligand>
        <name>GDP-alpha-D-mannuronate</name>
        <dbReference type="ChEBI" id="CHEBI:84886"/>
        <note>ligand shared between homodimeric partners</note>
    </ligand>
</feature>
<feature type="binding site" description="in chain A" evidence="2">
    <location>
        <position position="225"/>
    </location>
    <ligand>
        <name>GDP-alpha-D-mannuronate</name>
        <dbReference type="ChEBI" id="CHEBI:84886"/>
        <note>ligand shared between homodimeric partners</note>
    </ligand>
</feature>
<feature type="binding site" description="in chain B" evidence="2">
    <location>
        <position position="256"/>
    </location>
    <ligand>
        <name>GDP-alpha-D-mannuronate</name>
        <dbReference type="ChEBI" id="CHEBI:84886"/>
        <note>ligand shared between homodimeric partners</note>
    </ligand>
</feature>
<feature type="binding site" description="in chain B" evidence="2">
    <location>
        <position position="257"/>
    </location>
    <ligand>
        <name>GDP-alpha-D-mannuronate</name>
        <dbReference type="ChEBI" id="CHEBI:84886"/>
        <note>ligand shared between homodimeric partners</note>
    </ligand>
</feature>
<feature type="binding site" description="in chain B" evidence="2">
    <location>
        <position position="259"/>
    </location>
    <ligand>
        <name>GDP-alpha-D-mannuronate</name>
        <dbReference type="ChEBI" id="CHEBI:84886"/>
        <note>ligand shared between homodimeric partners</note>
    </ligand>
</feature>
<feature type="binding site" description="in chain B" evidence="2">
    <location>
        <position position="262"/>
    </location>
    <ligand>
        <name>GDP-alpha-D-mannuronate</name>
        <dbReference type="ChEBI" id="CHEBI:84886"/>
        <note>ligand shared between homodimeric partners</note>
    </ligand>
</feature>
<feature type="binding site" description="in chain B" evidence="2">
    <location>
        <position position="265"/>
    </location>
    <ligand>
        <name>GDP-alpha-D-mannuronate</name>
        <dbReference type="ChEBI" id="CHEBI:84886"/>
        <note>ligand shared between homodimeric partners</note>
    </ligand>
</feature>
<feature type="binding site" description="in chain B" evidence="2">
    <location>
        <position position="271"/>
    </location>
    <ligand>
        <name>NAD(+)</name>
        <dbReference type="ChEBI" id="CHEBI:57540"/>
        <note>ligand shared between homodimeric partners</note>
    </ligand>
</feature>
<feature type="binding site" description="in chain B" evidence="2">
    <location>
        <position position="324"/>
    </location>
    <ligand>
        <name>GDP-alpha-D-mannuronate</name>
        <dbReference type="ChEBI" id="CHEBI:84886"/>
        <note>ligand shared between homodimeric partners</note>
    </ligand>
</feature>
<feature type="binding site" description="in chain B" evidence="2">
    <location>
        <position position="331"/>
    </location>
    <ligand>
        <name>NAD(+)</name>
        <dbReference type="ChEBI" id="CHEBI:57540"/>
        <note>ligand shared between homodimeric partners</note>
    </ligand>
</feature>
<keyword id="KW-0016">Alginate biosynthesis</keyword>
<keyword id="KW-0520">NAD</keyword>
<keyword id="KW-0560">Oxidoreductase</keyword>
<keyword id="KW-1185">Reference proteome</keyword>
<organism>
    <name type="scientific">Pseudomonas syringae pv. tomato (strain ATCC BAA-871 / DC3000)</name>
    <dbReference type="NCBI Taxonomy" id="223283"/>
    <lineage>
        <taxon>Bacteria</taxon>
        <taxon>Pseudomonadati</taxon>
        <taxon>Pseudomonadota</taxon>
        <taxon>Gammaproteobacteria</taxon>
        <taxon>Pseudomonadales</taxon>
        <taxon>Pseudomonadaceae</taxon>
        <taxon>Pseudomonas</taxon>
    </lineage>
</organism>
<sequence length="438" mass="47608">MRISIFGLGYVGAVCAGCLSARGHDVVGVDISSTKIDLINNGKSPIVEPGLEELLQKGLATGKLRGTTDFAEAIRATDLSMICVGTPSKKNGDLELDYIESVCREIGYVLRDKNTRHTIVVRSTVLPGTVANVVIPILEDCSGKKAGVDFGVAVNPEFLRESTAIKDYDLPPMTVIGEFDKASGDVLQSLYEELDAPIIRKDIAVAEMIKYTCNVWHATKVTFANEIGNIAKAVGVDGREVMDVVCQDKALNLSQYYMRPGFAFGGSCLPKDVRALTYRAGSLDVDAPLLNSLMRSNTSQVQNAFDMVASYDTRKVALLGLSFKAGTDDLRESPLVELAEMLIGKGFDLSIFDSNVEYARVHGANKDYIESKIPHVSSLLNSDFDQVINDSDVIILGNRDERFRSLANKTPEGKRVIDLVGFMTNATTEDGRAEGICW</sequence>
<accession>Q887P8</accession>
<proteinExistence type="evidence at transcript level"/>
<protein>
    <recommendedName>
        <fullName>GDP-mannose 6-dehydrogenase</fullName>
        <shortName>GMD</shortName>
        <ecNumber>1.1.1.132</ecNumber>
    </recommendedName>
</protein>
<name>ALGD_PSESM</name>
<dbReference type="EC" id="1.1.1.132"/>
<dbReference type="EMBL" id="AY095346">
    <property type="protein sequence ID" value="AAM23310.1"/>
    <property type="molecule type" value="Genomic_DNA"/>
</dbReference>
<dbReference type="EMBL" id="AE016853">
    <property type="protein sequence ID" value="AAO54768.1"/>
    <property type="molecule type" value="Genomic_DNA"/>
</dbReference>
<dbReference type="RefSeq" id="NP_791073.1">
    <property type="nucleotide sequence ID" value="NC_004578.1"/>
</dbReference>
<dbReference type="RefSeq" id="WP_005764140.1">
    <property type="nucleotide sequence ID" value="NC_004578.1"/>
</dbReference>
<dbReference type="SMR" id="Q887P8"/>
<dbReference type="STRING" id="223283.PSPTO_1243"/>
<dbReference type="GeneID" id="1182879"/>
<dbReference type="KEGG" id="pst:PSPTO_1243"/>
<dbReference type="PATRIC" id="fig|223283.9.peg.1264"/>
<dbReference type="eggNOG" id="COG1004">
    <property type="taxonomic scope" value="Bacteria"/>
</dbReference>
<dbReference type="HOGENOM" id="CLU_023810_1_1_6"/>
<dbReference type="OrthoDB" id="9803238at2"/>
<dbReference type="PhylomeDB" id="Q887P8"/>
<dbReference type="UniPathway" id="UPA00286"/>
<dbReference type="PHI-base" id="PHI:7031"/>
<dbReference type="Proteomes" id="UP000002515">
    <property type="component" value="Chromosome"/>
</dbReference>
<dbReference type="GO" id="GO:0047919">
    <property type="term" value="F:GDP-mannose 6-dehydrogenase activity"/>
    <property type="evidence" value="ECO:0007669"/>
    <property type="project" value="UniProtKB-EC"/>
</dbReference>
<dbReference type="GO" id="GO:0051287">
    <property type="term" value="F:NAD binding"/>
    <property type="evidence" value="ECO:0007669"/>
    <property type="project" value="InterPro"/>
</dbReference>
<dbReference type="GO" id="GO:0042121">
    <property type="term" value="P:alginic acid biosynthetic process"/>
    <property type="evidence" value="ECO:0007669"/>
    <property type="project" value="UniProtKB-UniPathway"/>
</dbReference>
<dbReference type="Gene3D" id="1.20.5.170">
    <property type="match status" value="1"/>
</dbReference>
<dbReference type="Gene3D" id="3.40.50.720">
    <property type="entry name" value="NAD(P)-binding Rossmann-like Domain"/>
    <property type="match status" value="2"/>
</dbReference>
<dbReference type="InterPro" id="IPR008927">
    <property type="entry name" value="6-PGluconate_DH-like_C_sf"/>
</dbReference>
<dbReference type="InterPro" id="IPR028358">
    <property type="entry name" value="GDPman_DH"/>
</dbReference>
<dbReference type="InterPro" id="IPR036291">
    <property type="entry name" value="NAD(P)-bd_dom_sf"/>
</dbReference>
<dbReference type="InterPro" id="IPR017476">
    <property type="entry name" value="UDP-Glc/GDP-Man"/>
</dbReference>
<dbReference type="InterPro" id="IPR014027">
    <property type="entry name" value="UDP-Glc/GDP-Man_DH_C"/>
</dbReference>
<dbReference type="InterPro" id="IPR036220">
    <property type="entry name" value="UDP-Glc/GDP-Man_DH_C_sf"/>
</dbReference>
<dbReference type="InterPro" id="IPR014026">
    <property type="entry name" value="UDP-Glc/GDP-Man_DH_dimer"/>
</dbReference>
<dbReference type="InterPro" id="IPR001732">
    <property type="entry name" value="UDP-Glc/GDP-Man_DH_N"/>
</dbReference>
<dbReference type="NCBIfam" id="TIGR03026">
    <property type="entry name" value="NDP-sugDHase"/>
    <property type="match status" value="1"/>
</dbReference>
<dbReference type="PANTHER" id="PTHR43750:SF1">
    <property type="entry name" value="GDP-MANNOSE 6-DEHYDROGENASE"/>
    <property type="match status" value="1"/>
</dbReference>
<dbReference type="PANTHER" id="PTHR43750">
    <property type="entry name" value="UDP-GLUCOSE 6-DEHYDROGENASE TUAD"/>
    <property type="match status" value="1"/>
</dbReference>
<dbReference type="Pfam" id="PF00984">
    <property type="entry name" value="UDPG_MGDP_dh"/>
    <property type="match status" value="1"/>
</dbReference>
<dbReference type="Pfam" id="PF03720">
    <property type="entry name" value="UDPG_MGDP_dh_C"/>
    <property type="match status" value="1"/>
</dbReference>
<dbReference type="Pfam" id="PF03721">
    <property type="entry name" value="UDPG_MGDP_dh_N"/>
    <property type="match status" value="1"/>
</dbReference>
<dbReference type="PIRSF" id="PIRSF500135">
    <property type="entry name" value="GDPman_DH"/>
    <property type="match status" value="1"/>
</dbReference>
<dbReference type="PIRSF" id="PIRSF000124">
    <property type="entry name" value="UDPglc_GDPman_dh"/>
    <property type="match status" value="1"/>
</dbReference>
<dbReference type="SMART" id="SM00984">
    <property type="entry name" value="UDPG_MGDP_dh_C"/>
    <property type="match status" value="1"/>
</dbReference>
<dbReference type="SUPFAM" id="SSF48179">
    <property type="entry name" value="6-phosphogluconate dehydrogenase C-terminal domain-like"/>
    <property type="match status" value="1"/>
</dbReference>
<dbReference type="SUPFAM" id="SSF51735">
    <property type="entry name" value="NAD(P)-binding Rossmann-fold domains"/>
    <property type="match status" value="1"/>
</dbReference>
<dbReference type="SUPFAM" id="SSF52413">
    <property type="entry name" value="UDP-glucose/GDP-mannose dehydrogenase C-terminal domain"/>
    <property type="match status" value="1"/>
</dbReference>
<gene>
    <name type="primary">algD</name>
    <name type="ordered locus">PSPTO_1243</name>
</gene>
<comment type="function">
    <text evidence="1">Catalyzes the oxidation of guanosine diphospho-D-mannose (GDP-D-mannose) to GDP-D-mannuronic acid, a precursor for alginate polymerization. The alginate layer causes a mucoid phenotype and provides a protective barrier against host immune defenses and antibiotics (By similarity).</text>
</comment>
<comment type="catalytic activity">
    <reaction>
        <text>GDP-alpha-D-mannose + 2 NAD(+) + H2O = GDP-alpha-D-mannuronate + 2 NADH + 3 H(+)</text>
        <dbReference type="Rhea" id="RHEA:21728"/>
        <dbReference type="ChEBI" id="CHEBI:15377"/>
        <dbReference type="ChEBI" id="CHEBI:15378"/>
        <dbReference type="ChEBI" id="CHEBI:57527"/>
        <dbReference type="ChEBI" id="CHEBI:57540"/>
        <dbReference type="ChEBI" id="CHEBI:57945"/>
        <dbReference type="ChEBI" id="CHEBI:84886"/>
        <dbReference type="EC" id="1.1.1.132"/>
    </reaction>
</comment>
<comment type="pathway">
    <text>Glycan biosynthesis; alginate biosynthesis.</text>
</comment>
<comment type="induction">
    <text>By oxidative compounds such as H(2)O(2).</text>
</comment>
<comment type="similarity">
    <text evidence="3">Belongs to the UDP-glucose/GDP-mannose dehydrogenase family.</text>
</comment>
<reference key="1">
    <citation type="submission" date="2002-04" db="EMBL/GenBank/DDBJ databases">
        <title>Comparative analysis of the algD promoter, gene and protein from Pseudomonas syringae, Pseudomonas aeruginosa, and Azotobacter vinelandii.</title>
        <authorList>
            <person name="Keith R.C."/>
            <person name="Keith L.M."/>
            <person name="Bender C.L."/>
        </authorList>
    </citation>
    <scope>NUCLEOTIDE SEQUENCE [GENOMIC DNA]</scope>
    <source>
        <strain>ATCC BAA-871 / DC3000</strain>
    </source>
</reference>
<reference key="2">
    <citation type="journal article" date="2003" name="Proc. Natl. Acad. Sci. U.S.A.">
        <title>The complete genome sequence of the Arabidopsis and tomato pathogen Pseudomonas syringae pv. tomato DC3000.</title>
        <authorList>
            <person name="Buell C.R."/>
            <person name="Joardar V."/>
            <person name="Lindeberg M."/>
            <person name="Selengut J."/>
            <person name="Paulsen I.T."/>
            <person name="Gwinn M.L."/>
            <person name="Dodson R.J."/>
            <person name="DeBoy R.T."/>
            <person name="Durkin A.S."/>
            <person name="Kolonay J.F."/>
            <person name="Madupu R."/>
            <person name="Daugherty S.C."/>
            <person name="Brinkac L.M."/>
            <person name="Beanan M.J."/>
            <person name="Haft D.H."/>
            <person name="Nelson W.C."/>
            <person name="Davidsen T.M."/>
            <person name="Zafar N."/>
            <person name="Zhou L."/>
            <person name="Liu J."/>
            <person name="Yuan Q."/>
            <person name="Khouri H.M."/>
            <person name="Fedorova N.B."/>
            <person name="Tran B."/>
            <person name="Russell D."/>
            <person name="Berry K.J."/>
            <person name="Utterback T.R."/>
            <person name="Van Aken S.E."/>
            <person name="Feldblyum T.V."/>
            <person name="D'Ascenzo M."/>
            <person name="Deng W.-L."/>
            <person name="Ramos A.R."/>
            <person name="Alfano J.R."/>
            <person name="Cartinhour S."/>
            <person name="Chatterjee A.K."/>
            <person name="Delaney T.P."/>
            <person name="Lazarowitz S.G."/>
            <person name="Martin G.B."/>
            <person name="Schneider D.J."/>
            <person name="Tang X."/>
            <person name="Bender C.L."/>
            <person name="White O."/>
            <person name="Fraser C.M."/>
            <person name="Collmer A."/>
        </authorList>
    </citation>
    <scope>NUCLEOTIDE SEQUENCE [LARGE SCALE GENOMIC DNA]</scope>
    <source>
        <strain>ATCC BAA-871 / DC3000</strain>
    </source>
</reference>
<reference key="3">
    <citation type="journal article" date="2003" name="Microbiology">
        <title>Alginate gene expression by Pseudomonas syringae pv. tomato DC3000 in host and non-host plants.</title>
        <authorList>
            <person name="Keith R.C."/>
            <person name="Keith L.M."/>
            <person name="Hernandez-Guzman G."/>
            <person name="Uppalapati S.R."/>
            <person name="Bender C.L."/>
        </authorList>
    </citation>
    <scope>EXPRESSION IN HOST</scope>
    <source>
        <strain>ATCC BAA-871 / DC3000</strain>
    </source>
</reference>